<feature type="chain" id="PRO_0000121106" description="Ras-related protein Rab-5A">
    <location>
        <begin position="1"/>
        <end position="215"/>
    </location>
</feature>
<feature type="region of interest" description="Disordered" evidence="4">
    <location>
        <begin position="181"/>
        <end position="215"/>
    </location>
</feature>
<feature type="short sequence motif" description="Switch 1" evidence="2">
    <location>
        <begin position="44"/>
        <end position="56"/>
    </location>
</feature>
<feature type="short sequence motif" description="Switch 2" evidence="2">
    <location>
        <begin position="77"/>
        <end position="93"/>
    </location>
</feature>
<feature type="binding site" evidence="2">
    <location>
        <position position="29"/>
    </location>
    <ligand>
        <name>GTP</name>
        <dbReference type="ChEBI" id="CHEBI:37565"/>
    </ligand>
</feature>
<feature type="binding site" evidence="2">
    <location>
        <position position="30"/>
    </location>
    <ligand>
        <name>GTP</name>
        <dbReference type="ChEBI" id="CHEBI:37565"/>
    </ligand>
</feature>
<feature type="binding site" evidence="2">
    <location>
        <position position="32"/>
    </location>
    <ligand>
        <name>GTP</name>
        <dbReference type="ChEBI" id="CHEBI:37565"/>
    </ligand>
</feature>
<feature type="binding site" evidence="2">
    <location>
        <position position="33"/>
    </location>
    <ligand>
        <name>GTP</name>
        <dbReference type="ChEBI" id="CHEBI:37565"/>
    </ligand>
</feature>
<feature type="binding site" evidence="2">
    <location>
        <position position="34"/>
    </location>
    <ligand>
        <name>GTP</name>
        <dbReference type="ChEBI" id="CHEBI:37565"/>
    </ligand>
</feature>
<feature type="binding site" evidence="2">
    <location>
        <position position="34"/>
    </location>
    <ligand>
        <name>Mg(2+)</name>
        <dbReference type="ChEBI" id="CHEBI:18420"/>
    </ligand>
</feature>
<feature type="binding site" evidence="2">
    <location>
        <position position="35"/>
    </location>
    <ligand>
        <name>GTP</name>
        <dbReference type="ChEBI" id="CHEBI:37565"/>
    </ligand>
</feature>
<feature type="binding site" evidence="2">
    <location>
        <position position="46"/>
    </location>
    <ligand>
        <name>GTP</name>
        <dbReference type="ChEBI" id="CHEBI:37565"/>
    </ligand>
</feature>
<feature type="binding site" evidence="2">
    <location>
        <position position="47"/>
    </location>
    <ligand>
        <name>GTP</name>
        <dbReference type="ChEBI" id="CHEBI:37565"/>
    </ligand>
</feature>
<feature type="binding site" evidence="2">
    <location>
        <position position="52"/>
    </location>
    <ligand>
        <name>GTP</name>
        <dbReference type="ChEBI" id="CHEBI:37565"/>
    </ligand>
</feature>
<feature type="binding site" evidence="2">
    <location>
        <position position="52"/>
    </location>
    <ligand>
        <name>Mg(2+)</name>
        <dbReference type="ChEBI" id="CHEBI:18420"/>
    </ligand>
</feature>
<feature type="binding site" evidence="2">
    <location>
        <position position="78"/>
    </location>
    <ligand>
        <name>GTP</name>
        <dbReference type="ChEBI" id="CHEBI:37565"/>
    </ligand>
</feature>
<feature type="binding site" evidence="2">
    <location>
        <position position="133"/>
    </location>
    <ligand>
        <name>GTP</name>
        <dbReference type="ChEBI" id="CHEBI:37565"/>
    </ligand>
</feature>
<feature type="binding site" evidence="2">
    <location>
        <position position="134"/>
    </location>
    <ligand>
        <name>GTP</name>
        <dbReference type="ChEBI" id="CHEBI:37565"/>
    </ligand>
</feature>
<feature type="binding site" evidence="2">
    <location>
        <position position="136"/>
    </location>
    <ligand>
        <name>GTP</name>
        <dbReference type="ChEBI" id="CHEBI:37565"/>
    </ligand>
</feature>
<feature type="binding site" evidence="2">
    <location>
        <position position="164"/>
    </location>
    <ligand>
        <name>GTP</name>
        <dbReference type="ChEBI" id="CHEBI:37565"/>
    </ligand>
</feature>
<feature type="binding site" evidence="2">
    <location>
        <position position="165"/>
    </location>
    <ligand>
        <name>GTP</name>
        <dbReference type="ChEBI" id="CHEBI:37565"/>
    </ligand>
</feature>
<feature type="modified residue" description="Phosphoserine" evidence="2">
    <location>
        <position position="84"/>
    </location>
</feature>
<feature type="lipid moiety-binding region" description="S-geranylgeranyl cysteine" evidence="2">
    <location>
        <position position="212"/>
    </location>
</feature>
<feature type="lipid moiety-binding region" description="S-geranylgeranyl cysteine" evidence="2">
    <location>
        <position position="213"/>
    </location>
</feature>
<feature type="mutagenesis site" description="Inhibits endosome localization. Disrupts interaction of RAB5A and OCRL with INPP5F. Prevents its localization to apoptotic cell corpse-containing early phagosomes. Maturation of apoptotic cell-containing phagosome into acidic phagosomes is decreased. Interacts with PIK3C3." evidence="6 9">
    <original>S</original>
    <variation>N</variation>
    <location>
        <position position="34"/>
    </location>
</feature>
<feature type="mutagenesis site" description="Induces the formation of larger endosomes. No effect on interaction with INPP5F. Prevents interaction with DYN2 without affecting the interaction with PIK3C3." evidence="6 9">
    <original>Q</original>
    <variation>L</variation>
    <location>
        <position position="79"/>
    </location>
</feature>
<feature type="sequence conflict" description="In Ref. 3; BAE29485." evidence="10" ref="3">
    <original>N</original>
    <variation>D</variation>
    <location>
        <position position="13"/>
    </location>
</feature>
<feature type="sequence conflict" description="In Ref. 3; BAB22245." evidence="10" ref="3">
    <original>Q</original>
    <variation>R</variation>
    <location>
        <position position="119"/>
    </location>
</feature>
<reference key="1">
    <citation type="journal article" date="2002" name="J. Biol. Chem.">
        <title>The Slp homology domain of synaptotagmin-like proteins 1-4 and Slac2 functions as a novel Rab27A binding domain.</title>
        <authorList>
            <person name="Kuroda T.S."/>
            <person name="Fukuda M."/>
            <person name="Ariga H."/>
            <person name="Mikoshiba K."/>
        </authorList>
    </citation>
    <scope>NUCLEOTIDE SEQUENCE [MRNA]</scope>
    <source>
        <strain>BALB/cJ</strain>
        <tissue>Brain</tissue>
    </source>
</reference>
<reference key="2">
    <citation type="journal article" date="2006" name="Genes Cells">
        <title>Screening for target Rabs of TBC (Tre-2/Bub2/Cdc16) domain-containing proteins based on their Rab-binding activity.</title>
        <authorList>
            <person name="Itoh T."/>
            <person name="Satoh M."/>
            <person name="Kanno E."/>
            <person name="Fukuda M."/>
        </authorList>
    </citation>
    <scope>NUCLEOTIDE SEQUENCE [MRNA]</scope>
    <source>
        <strain>BALB/cJ</strain>
        <tissue>Brain</tissue>
    </source>
</reference>
<reference key="3">
    <citation type="journal article" date="2005" name="Science">
        <title>The transcriptional landscape of the mammalian genome.</title>
        <authorList>
            <person name="Carninci P."/>
            <person name="Kasukawa T."/>
            <person name="Katayama S."/>
            <person name="Gough J."/>
            <person name="Frith M.C."/>
            <person name="Maeda N."/>
            <person name="Oyama R."/>
            <person name="Ravasi T."/>
            <person name="Lenhard B."/>
            <person name="Wells C."/>
            <person name="Kodzius R."/>
            <person name="Shimokawa K."/>
            <person name="Bajic V.B."/>
            <person name="Brenner S.E."/>
            <person name="Batalov S."/>
            <person name="Forrest A.R."/>
            <person name="Zavolan M."/>
            <person name="Davis M.J."/>
            <person name="Wilming L.G."/>
            <person name="Aidinis V."/>
            <person name="Allen J.E."/>
            <person name="Ambesi-Impiombato A."/>
            <person name="Apweiler R."/>
            <person name="Aturaliya R.N."/>
            <person name="Bailey T.L."/>
            <person name="Bansal M."/>
            <person name="Baxter L."/>
            <person name="Beisel K.W."/>
            <person name="Bersano T."/>
            <person name="Bono H."/>
            <person name="Chalk A.M."/>
            <person name="Chiu K.P."/>
            <person name="Choudhary V."/>
            <person name="Christoffels A."/>
            <person name="Clutterbuck D.R."/>
            <person name="Crowe M.L."/>
            <person name="Dalla E."/>
            <person name="Dalrymple B.P."/>
            <person name="de Bono B."/>
            <person name="Della Gatta G."/>
            <person name="di Bernardo D."/>
            <person name="Down T."/>
            <person name="Engstrom P."/>
            <person name="Fagiolini M."/>
            <person name="Faulkner G."/>
            <person name="Fletcher C.F."/>
            <person name="Fukushima T."/>
            <person name="Furuno M."/>
            <person name="Futaki S."/>
            <person name="Gariboldi M."/>
            <person name="Georgii-Hemming P."/>
            <person name="Gingeras T.R."/>
            <person name="Gojobori T."/>
            <person name="Green R.E."/>
            <person name="Gustincich S."/>
            <person name="Harbers M."/>
            <person name="Hayashi Y."/>
            <person name="Hensch T.K."/>
            <person name="Hirokawa N."/>
            <person name="Hill D."/>
            <person name="Huminiecki L."/>
            <person name="Iacono M."/>
            <person name="Ikeo K."/>
            <person name="Iwama A."/>
            <person name="Ishikawa T."/>
            <person name="Jakt M."/>
            <person name="Kanapin A."/>
            <person name="Katoh M."/>
            <person name="Kawasawa Y."/>
            <person name="Kelso J."/>
            <person name="Kitamura H."/>
            <person name="Kitano H."/>
            <person name="Kollias G."/>
            <person name="Krishnan S.P."/>
            <person name="Kruger A."/>
            <person name="Kummerfeld S.K."/>
            <person name="Kurochkin I.V."/>
            <person name="Lareau L.F."/>
            <person name="Lazarevic D."/>
            <person name="Lipovich L."/>
            <person name="Liu J."/>
            <person name="Liuni S."/>
            <person name="McWilliam S."/>
            <person name="Madan Babu M."/>
            <person name="Madera M."/>
            <person name="Marchionni L."/>
            <person name="Matsuda H."/>
            <person name="Matsuzawa S."/>
            <person name="Miki H."/>
            <person name="Mignone F."/>
            <person name="Miyake S."/>
            <person name="Morris K."/>
            <person name="Mottagui-Tabar S."/>
            <person name="Mulder N."/>
            <person name="Nakano N."/>
            <person name="Nakauchi H."/>
            <person name="Ng P."/>
            <person name="Nilsson R."/>
            <person name="Nishiguchi S."/>
            <person name="Nishikawa S."/>
            <person name="Nori F."/>
            <person name="Ohara O."/>
            <person name="Okazaki Y."/>
            <person name="Orlando V."/>
            <person name="Pang K.C."/>
            <person name="Pavan W.J."/>
            <person name="Pavesi G."/>
            <person name="Pesole G."/>
            <person name="Petrovsky N."/>
            <person name="Piazza S."/>
            <person name="Reed J."/>
            <person name="Reid J.F."/>
            <person name="Ring B.Z."/>
            <person name="Ringwald M."/>
            <person name="Rost B."/>
            <person name="Ruan Y."/>
            <person name="Salzberg S.L."/>
            <person name="Sandelin A."/>
            <person name="Schneider C."/>
            <person name="Schoenbach C."/>
            <person name="Sekiguchi K."/>
            <person name="Semple C.A."/>
            <person name="Seno S."/>
            <person name="Sessa L."/>
            <person name="Sheng Y."/>
            <person name="Shibata Y."/>
            <person name="Shimada H."/>
            <person name="Shimada K."/>
            <person name="Silva D."/>
            <person name="Sinclair B."/>
            <person name="Sperling S."/>
            <person name="Stupka E."/>
            <person name="Sugiura K."/>
            <person name="Sultana R."/>
            <person name="Takenaka Y."/>
            <person name="Taki K."/>
            <person name="Tammoja K."/>
            <person name="Tan S.L."/>
            <person name="Tang S."/>
            <person name="Taylor M.S."/>
            <person name="Tegner J."/>
            <person name="Teichmann S.A."/>
            <person name="Ueda H.R."/>
            <person name="van Nimwegen E."/>
            <person name="Verardo R."/>
            <person name="Wei C.L."/>
            <person name="Yagi K."/>
            <person name="Yamanishi H."/>
            <person name="Zabarovsky E."/>
            <person name="Zhu S."/>
            <person name="Zimmer A."/>
            <person name="Hide W."/>
            <person name="Bult C."/>
            <person name="Grimmond S.M."/>
            <person name="Teasdale R.D."/>
            <person name="Liu E.T."/>
            <person name="Brusic V."/>
            <person name="Quackenbush J."/>
            <person name="Wahlestedt C."/>
            <person name="Mattick J.S."/>
            <person name="Hume D.A."/>
            <person name="Kai C."/>
            <person name="Sasaki D."/>
            <person name="Tomaru Y."/>
            <person name="Fukuda S."/>
            <person name="Kanamori-Katayama M."/>
            <person name="Suzuki M."/>
            <person name="Aoki J."/>
            <person name="Arakawa T."/>
            <person name="Iida J."/>
            <person name="Imamura K."/>
            <person name="Itoh M."/>
            <person name="Kato T."/>
            <person name="Kawaji H."/>
            <person name="Kawagashira N."/>
            <person name="Kawashima T."/>
            <person name="Kojima M."/>
            <person name="Kondo S."/>
            <person name="Konno H."/>
            <person name="Nakano K."/>
            <person name="Ninomiya N."/>
            <person name="Nishio T."/>
            <person name="Okada M."/>
            <person name="Plessy C."/>
            <person name="Shibata K."/>
            <person name="Shiraki T."/>
            <person name="Suzuki S."/>
            <person name="Tagami M."/>
            <person name="Waki K."/>
            <person name="Watahiki A."/>
            <person name="Okamura-Oho Y."/>
            <person name="Suzuki H."/>
            <person name="Kawai J."/>
            <person name="Hayashizaki Y."/>
        </authorList>
    </citation>
    <scope>NUCLEOTIDE SEQUENCE [LARGE SCALE MRNA]</scope>
    <source>
        <strain>C57BL/6J</strain>
        <tissue>Bone marrow</tissue>
        <tissue>Embryonic stem cell</tissue>
        <tissue>Head</tissue>
        <tissue>Small intestine</tissue>
    </source>
</reference>
<reference key="4">
    <citation type="submission" date="2005-07" db="EMBL/GenBank/DDBJ databases">
        <authorList>
            <person name="Mural R.J."/>
            <person name="Adams M.D."/>
            <person name="Myers E.W."/>
            <person name="Smith H.O."/>
            <person name="Venter J.C."/>
        </authorList>
    </citation>
    <scope>NUCLEOTIDE SEQUENCE [LARGE SCALE GENOMIC DNA]</scope>
</reference>
<reference key="5">
    <citation type="journal article" date="2004" name="Genome Res.">
        <title>The status, quality, and expansion of the NIH full-length cDNA project: the Mammalian Gene Collection (MGC).</title>
        <authorList>
            <consortium name="The MGC Project Team"/>
        </authorList>
    </citation>
    <scope>NUCLEOTIDE SEQUENCE [LARGE SCALE MRNA]</scope>
    <source>
        <strain>FVB/N</strain>
        <tissue>Mammary tumor</tissue>
    </source>
</reference>
<reference key="6">
    <citation type="submission" date="2007-04" db="UniProtKB">
        <authorList>
            <person name="Lubec G."/>
            <person name="Kang S.U."/>
        </authorList>
    </citation>
    <scope>PROTEIN SEQUENCE OF 23-33; 82-110 AND 184-195</scope>
    <scope>IDENTIFICATION BY MASS SPECTROMETRY</scope>
    <source>
        <strain>C57BL/6J</strain>
        <tissue>Brain</tissue>
    </source>
</reference>
<reference key="7">
    <citation type="journal article" date="2007" name="Genomics">
        <title>Identification of three novel proteins (SGSM1, 2, 3) which modulate small G protein (RAP and RAB)-mediated signaling pathway.</title>
        <authorList>
            <person name="Yang H."/>
            <person name="Sasaki T."/>
            <person name="Minoshima S."/>
            <person name="Shimizu N."/>
        </authorList>
    </citation>
    <scope>INTERACTION WITH SGSM1 AND SGSM3</scope>
</reference>
<reference key="8">
    <citation type="journal article" date="2008" name="Nat. Cell Biol.">
        <title>A pathway for phagosome maturation during engulfment of apoptotic cells.</title>
        <authorList>
            <person name="Kinchen J.M."/>
            <person name="Doukoumetzidis K."/>
            <person name="Almendinger J."/>
            <person name="Stergiou L."/>
            <person name="Tosello-Trampont A."/>
            <person name="Sifri C.D."/>
            <person name="Hengartner M.O."/>
            <person name="Ravichandran K.S."/>
        </authorList>
    </citation>
    <scope>FUNCTION</scope>
    <scope>INTERACTION WITH PIK3C3 AND DYN2</scope>
    <scope>SUBCELLULAR LOCATION</scope>
    <scope>MUTAGENESIS OF SER-34 AND GLN-79</scope>
</reference>
<reference key="9">
    <citation type="journal article" date="2010" name="Cell">
        <title>A tissue-specific atlas of mouse protein phosphorylation and expression.</title>
        <authorList>
            <person name="Huttlin E.L."/>
            <person name="Jedrychowski M.P."/>
            <person name="Elias J.E."/>
            <person name="Goswami T."/>
            <person name="Rad R."/>
            <person name="Beausoleil S.A."/>
            <person name="Villen J."/>
            <person name="Haas W."/>
            <person name="Sowa M.E."/>
            <person name="Gygi S.P."/>
        </authorList>
    </citation>
    <scope>IDENTIFICATION BY MASS SPECTROMETRY [LARGE SCALE ANALYSIS]</scope>
    <source>
        <tissue>Brain</tissue>
        <tissue>Brown adipose tissue</tissue>
        <tissue>Heart</tissue>
        <tissue>Kidney</tissue>
        <tissue>Liver</tissue>
        <tissue>Lung</tissue>
        <tissue>Pancreas</tissue>
        <tissue>Spleen</tissue>
        <tissue>Testis</tissue>
    </source>
</reference>
<reference key="10">
    <citation type="journal article" date="2010" name="J. Cell Biol.">
        <title>The class IA phosphatidylinositol 3-kinase p110-beta subunit is a positive regulator of autophagy.</title>
        <authorList>
            <person name="Dou Z."/>
            <person name="Chattopadhyay M."/>
            <person name="Pan J.-A."/>
            <person name="Guerriero J.L."/>
            <person name="Jiang Y.-P."/>
            <person name="Ballou L.M."/>
            <person name="Yue Z."/>
            <person name="Lin R.Z."/>
            <person name="Zong W.-X."/>
        </authorList>
    </citation>
    <scope>INTERACTION WITH PIK3CB</scope>
</reference>
<reference key="11">
    <citation type="journal article" date="2015" name="J. Cell Biol.">
        <title>Sac2/INPP5F is an inositol 4-phosphatase that functions in the endocytic pathway.</title>
        <authorList>
            <person name="Nakatsu F."/>
            <person name="Messa M."/>
            <person name="Nandez R."/>
            <person name="Czapla H."/>
            <person name="Zou Y."/>
            <person name="Strittmatter S.M."/>
            <person name="De Camilli P."/>
        </authorList>
    </citation>
    <scope>SUBCELLULAR LOCATION</scope>
    <scope>INTERACTION WITH OCRL AND INPP5F</scope>
    <scope>MUTAGENESIS OF SER-34 AND GLN-79</scope>
</reference>
<reference key="12">
    <citation type="journal article" date="2015" name="Mol. Biol. Cell">
        <title>Rab31 and APPL2 enhance FcgammaR-mediated phagocytosis through PI3K/Akt signaling in macrophages.</title>
        <authorList>
            <person name="Yeo J.C."/>
            <person name="Wall A.A."/>
            <person name="Luo L."/>
            <person name="Stow J.L."/>
        </authorList>
    </citation>
    <scope>INTERACTION WITH APPL2</scope>
</reference>
<dbReference type="EC" id="3.6.5.2" evidence="2"/>
<dbReference type="EMBL" id="AB232593">
    <property type="protein sequence ID" value="BAF02855.1"/>
    <property type="molecule type" value="mRNA"/>
</dbReference>
<dbReference type="EMBL" id="AK002631">
    <property type="protein sequence ID" value="BAB22245.1"/>
    <property type="molecule type" value="mRNA"/>
</dbReference>
<dbReference type="EMBL" id="AK008198">
    <property type="protein sequence ID" value="BAB25527.1"/>
    <property type="molecule type" value="mRNA"/>
</dbReference>
<dbReference type="EMBL" id="AK010495">
    <property type="protein sequence ID" value="BAB26985.1"/>
    <property type="molecule type" value="mRNA"/>
</dbReference>
<dbReference type="EMBL" id="AK081999">
    <property type="protein sequence ID" value="BAC38391.1"/>
    <property type="molecule type" value="mRNA"/>
</dbReference>
<dbReference type="EMBL" id="AK150296">
    <property type="protein sequence ID" value="BAE29448.1"/>
    <property type="molecule type" value="mRNA"/>
</dbReference>
<dbReference type="EMBL" id="AK150346">
    <property type="protein sequence ID" value="BAE29485.1"/>
    <property type="molecule type" value="mRNA"/>
</dbReference>
<dbReference type="EMBL" id="AK150405">
    <property type="protein sequence ID" value="BAE29531.1"/>
    <property type="molecule type" value="mRNA"/>
</dbReference>
<dbReference type="EMBL" id="AK151066">
    <property type="protein sequence ID" value="BAE30082.1"/>
    <property type="molecule type" value="mRNA"/>
</dbReference>
<dbReference type="EMBL" id="AK153131">
    <property type="protein sequence ID" value="BAE31744.1"/>
    <property type="molecule type" value="mRNA"/>
</dbReference>
<dbReference type="EMBL" id="AK159706">
    <property type="protein sequence ID" value="BAE35305.1"/>
    <property type="molecule type" value="mRNA"/>
</dbReference>
<dbReference type="EMBL" id="CH466559">
    <property type="protein sequence ID" value="EDL23663.1"/>
    <property type="molecule type" value="Genomic_DNA"/>
</dbReference>
<dbReference type="EMBL" id="BC004842">
    <property type="protein sequence ID" value="AAH04842.1"/>
    <property type="molecule type" value="mRNA"/>
</dbReference>
<dbReference type="EMBL" id="BC034370">
    <property type="protein sequence ID" value="AAH34370.1"/>
    <property type="molecule type" value="mRNA"/>
</dbReference>
<dbReference type="EMBL" id="BC096481">
    <property type="protein sequence ID" value="AAH96481.1"/>
    <property type="molecule type" value="mRNA"/>
</dbReference>
<dbReference type="CCDS" id="CCDS28879.1"/>
<dbReference type="RefSeq" id="NP_080163.1">
    <property type="nucleotide sequence ID" value="NM_025887.4"/>
</dbReference>
<dbReference type="SMR" id="Q9CQD1"/>
<dbReference type="BioGRID" id="234840">
    <property type="interactions" value="32"/>
</dbReference>
<dbReference type="FunCoup" id="Q9CQD1">
    <property type="interactions" value="4059"/>
</dbReference>
<dbReference type="IntAct" id="Q9CQD1">
    <property type="interactions" value="11"/>
</dbReference>
<dbReference type="MINT" id="Q9CQD1"/>
<dbReference type="STRING" id="10090.ENSMUSP00000017975"/>
<dbReference type="GlyGen" id="Q9CQD1">
    <property type="glycosylation" value="1 site, 1 O-linked glycan (1 site)"/>
</dbReference>
<dbReference type="iPTMnet" id="Q9CQD1"/>
<dbReference type="PhosphoSitePlus" id="Q9CQD1"/>
<dbReference type="SwissPalm" id="Q9CQD1"/>
<dbReference type="jPOST" id="Q9CQD1"/>
<dbReference type="PaxDb" id="10090-ENSMUSP00000017975"/>
<dbReference type="PeptideAtlas" id="Q9CQD1"/>
<dbReference type="ProteomicsDB" id="300381"/>
<dbReference type="Pumba" id="Q9CQD1"/>
<dbReference type="Antibodypedia" id="3882">
    <property type="antibodies" value="741 antibodies from 41 providers"/>
</dbReference>
<dbReference type="DNASU" id="271457"/>
<dbReference type="Ensembl" id="ENSMUST00000017975.7">
    <property type="protein sequence ID" value="ENSMUSP00000017975.6"/>
    <property type="gene ID" value="ENSMUSG00000017831.9"/>
</dbReference>
<dbReference type="GeneID" id="271457"/>
<dbReference type="KEGG" id="mmu:271457"/>
<dbReference type="UCSC" id="uc008czn.1">
    <property type="organism name" value="mouse"/>
</dbReference>
<dbReference type="AGR" id="MGI:105926"/>
<dbReference type="CTD" id="5868"/>
<dbReference type="MGI" id="MGI:105926">
    <property type="gene designation" value="Rab5a"/>
</dbReference>
<dbReference type="VEuPathDB" id="HostDB:ENSMUSG00000017831"/>
<dbReference type="eggNOG" id="KOG0092">
    <property type="taxonomic scope" value="Eukaryota"/>
</dbReference>
<dbReference type="GeneTree" id="ENSGT00940000154337"/>
<dbReference type="HOGENOM" id="CLU_041217_10_2_1"/>
<dbReference type="InParanoid" id="Q9CQD1"/>
<dbReference type="OMA" id="GASFFRY"/>
<dbReference type="OrthoDB" id="63533at2759"/>
<dbReference type="PhylomeDB" id="Q9CQD1"/>
<dbReference type="TreeFam" id="TF300199"/>
<dbReference type="Reactome" id="R-MMU-1660499">
    <property type="pathway name" value="Synthesis of PIPs at the plasma membrane"/>
</dbReference>
<dbReference type="Reactome" id="R-MMU-8856828">
    <property type="pathway name" value="Clathrin-mediated endocytosis"/>
</dbReference>
<dbReference type="Reactome" id="R-MMU-8873719">
    <property type="pathway name" value="RAB geranylgeranylation"/>
</dbReference>
<dbReference type="Reactome" id="R-MMU-8876198">
    <property type="pathway name" value="RAB GEFs exchange GTP for GDP on RABs"/>
</dbReference>
<dbReference type="Reactome" id="R-MMU-983231">
    <property type="pathway name" value="Factors involved in megakaryocyte development and platelet production"/>
</dbReference>
<dbReference type="BioGRID-ORCS" id="271457">
    <property type="hits" value="3 hits in 81 CRISPR screens"/>
</dbReference>
<dbReference type="CD-CODE" id="CE726F99">
    <property type="entry name" value="Postsynaptic density"/>
</dbReference>
<dbReference type="ChiTaRS" id="Rab5a">
    <property type="organism name" value="mouse"/>
</dbReference>
<dbReference type="PRO" id="PR:Q9CQD1"/>
<dbReference type="Proteomes" id="UP000000589">
    <property type="component" value="Chromosome 17"/>
</dbReference>
<dbReference type="RNAct" id="Q9CQD1">
    <property type="molecule type" value="protein"/>
</dbReference>
<dbReference type="Bgee" id="ENSMUSG00000017831">
    <property type="expression patterns" value="Expressed in esophagus and 69 other cell types or tissues"/>
</dbReference>
<dbReference type="GO" id="GO:0015629">
    <property type="term" value="C:actin cytoskeleton"/>
    <property type="evidence" value="ECO:0000314"/>
    <property type="project" value="MGI"/>
</dbReference>
<dbReference type="GO" id="GO:0030424">
    <property type="term" value="C:axon"/>
    <property type="evidence" value="ECO:0000250"/>
    <property type="project" value="ParkinsonsUK-UCL"/>
</dbReference>
<dbReference type="GO" id="GO:0043679">
    <property type="term" value="C:axon terminus"/>
    <property type="evidence" value="ECO:0000250"/>
    <property type="project" value="ParkinsonsUK-UCL"/>
</dbReference>
<dbReference type="GO" id="GO:0005737">
    <property type="term" value="C:cytoplasm"/>
    <property type="evidence" value="ECO:0000314"/>
    <property type="project" value="MGI"/>
</dbReference>
<dbReference type="GO" id="GO:0098559">
    <property type="term" value="C:cytoplasmic side of early endosome membrane"/>
    <property type="evidence" value="ECO:0007669"/>
    <property type="project" value="Ensembl"/>
</dbReference>
<dbReference type="GO" id="GO:0005829">
    <property type="term" value="C:cytosol"/>
    <property type="evidence" value="ECO:0007669"/>
    <property type="project" value="UniProtKB-SubCell"/>
</dbReference>
<dbReference type="GO" id="GO:0030425">
    <property type="term" value="C:dendrite"/>
    <property type="evidence" value="ECO:0000250"/>
    <property type="project" value="ParkinsonsUK-UCL"/>
</dbReference>
<dbReference type="GO" id="GO:0005769">
    <property type="term" value="C:early endosome"/>
    <property type="evidence" value="ECO:0000314"/>
    <property type="project" value="MGI"/>
</dbReference>
<dbReference type="GO" id="GO:0032009">
    <property type="term" value="C:early phagosome"/>
    <property type="evidence" value="ECO:0000314"/>
    <property type="project" value="UniProtKB"/>
</dbReference>
<dbReference type="GO" id="GO:0030139">
    <property type="term" value="C:endocytic vesicle"/>
    <property type="evidence" value="ECO:0000314"/>
    <property type="project" value="MGI"/>
</dbReference>
<dbReference type="GO" id="GO:0005768">
    <property type="term" value="C:endosome"/>
    <property type="evidence" value="ECO:0000314"/>
    <property type="project" value="UniProtKB"/>
</dbReference>
<dbReference type="GO" id="GO:0042470">
    <property type="term" value="C:melanosome"/>
    <property type="evidence" value="ECO:0007669"/>
    <property type="project" value="UniProtKB-SubCell"/>
</dbReference>
<dbReference type="GO" id="GO:0045121">
    <property type="term" value="C:membrane raft"/>
    <property type="evidence" value="ECO:0000314"/>
    <property type="project" value="MGI"/>
</dbReference>
<dbReference type="GO" id="GO:0043025">
    <property type="term" value="C:neuronal cell body"/>
    <property type="evidence" value="ECO:0000250"/>
    <property type="project" value="ParkinsonsUK-UCL"/>
</dbReference>
<dbReference type="GO" id="GO:0005654">
    <property type="term" value="C:nucleoplasm"/>
    <property type="evidence" value="ECO:0007669"/>
    <property type="project" value="Ensembl"/>
</dbReference>
<dbReference type="GO" id="GO:0045335">
    <property type="term" value="C:phagocytic vesicle"/>
    <property type="evidence" value="ECO:0000314"/>
    <property type="project" value="UniProtKB"/>
</dbReference>
<dbReference type="GO" id="GO:0030670">
    <property type="term" value="C:phagocytic vesicle membrane"/>
    <property type="evidence" value="ECO:0007669"/>
    <property type="project" value="UniProtKB-SubCell"/>
</dbReference>
<dbReference type="GO" id="GO:0005886">
    <property type="term" value="C:plasma membrane"/>
    <property type="evidence" value="ECO:0000314"/>
    <property type="project" value="MGI"/>
</dbReference>
<dbReference type="GO" id="GO:0001726">
    <property type="term" value="C:ruffle"/>
    <property type="evidence" value="ECO:0000314"/>
    <property type="project" value="MGI"/>
</dbReference>
<dbReference type="GO" id="GO:0036477">
    <property type="term" value="C:somatodendritic compartment"/>
    <property type="evidence" value="ECO:0000250"/>
    <property type="project" value="ParkinsonsUK-UCL"/>
</dbReference>
<dbReference type="GO" id="GO:0008021">
    <property type="term" value="C:synaptic vesicle"/>
    <property type="evidence" value="ECO:0000250"/>
    <property type="project" value="ParkinsonsUK-UCL"/>
</dbReference>
<dbReference type="GO" id="GO:0043195">
    <property type="term" value="C:terminal bouton"/>
    <property type="evidence" value="ECO:0000250"/>
    <property type="project" value="ParkinsonsUK-UCL"/>
</dbReference>
<dbReference type="GO" id="GO:0003925">
    <property type="term" value="F:G protein activity"/>
    <property type="evidence" value="ECO:0007669"/>
    <property type="project" value="UniProtKB-EC"/>
</dbReference>
<dbReference type="GO" id="GO:0019003">
    <property type="term" value="F:GDP binding"/>
    <property type="evidence" value="ECO:0000250"/>
    <property type="project" value="UniProtKB"/>
</dbReference>
<dbReference type="GO" id="GO:0005525">
    <property type="term" value="F:GTP binding"/>
    <property type="evidence" value="ECO:0000250"/>
    <property type="project" value="UniProtKB"/>
</dbReference>
<dbReference type="GO" id="GO:0003924">
    <property type="term" value="F:GTPase activity"/>
    <property type="evidence" value="ECO:0000314"/>
    <property type="project" value="MGI"/>
</dbReference>
<dbReference type="GO" id="GO:0019001">
    <property type="term" value="F:guanyl nucleotide binding"/>
    <property type="evidence" value="ECO:0000314"/>
    <property type="project" value="MGI"/>
</dbReference>
<dbReference type="GO" id="GO:0150093">
    <property type="term" value="P:amyloid-beta clearance by transcytosis"/>
    <property type="evidence" value="ECO:0007669"/>
    <property type="project" value="Ensembl"/>
</dbReference>
<dbReference type="GO" id="GO:0060070">
    <property type="term" value="P:canonical Wnt signaling pathway"/>
    <property type="evidence" value="ECO:0007669"/>
    <property type="project" value="Ensembl"/>
</dbReference>
<dbReference type="GO" id="GO:0045022">
    <property type="term" value="P:early endosome to late endosome transport"/>
    <property type="evidence" value="ECO:0007669"/>
    <property type="project" value="Ensembl"/>
</dbReference>
<dbReference type="GO" id="GO:0006897">
    <property type="term" value="P:endocytosis"/>
    <property type="evidence" value="ECO:0000314"/>
    <property type="project" value="MGI"/>
</dbReference>
<dbReference type="GO" id="GO:0044788">
    <property type="term" value="P:modulation by host of viral process"/>
    <property type="evidence" value="ECO:0007669"/>
    <property type="project" value="Ensembl"/>
</dbReference>
<dbReference type="GO" id="GO:0006909">
    <property type="term" value="P:phagocytosis"/>
    <property type="evidence" value="ECO:0007669"/>
    <property type="project" value="UniProtKB-KW"/>
</dbReference>
<dbReference type="GO" id="GO:0045921">
    <property type="term" value="P:positive regulation of exocytosis"/>
    <property type="evidence" value="ECO:0007669"/>
    <property type="project" value="Ensembl"/>
</dbReference>
<dbReference type="GO" id="GO:0015031">
    <property type="term" value="P:protein transport"/>
    <property type="evidence" value="ECO:0007669"/>
    <property type="project" value="UniProtKB-KW"/>
</dbReference>
<dbReference type="GO" id="GO:0031623">
    <property type="term" value="P:receptor internalization"/>
    <property type="evidence" value="ECO:0007669"/>
    <property type="project" value="Ensembl"/>
</dbReference>
<dbReference type="GO" id="GO:0051036">
    <property type="term" value="P:regulation of endosome size"/>
    <property type="evidence" value="ECO:0007669"/>
    <property type="project" value="Ensembl"/>
</dbReference>
<dbReference type="GO" id="GO:0051489">
    <property type="term" value="P:regulation of filopodium assembly"/>
    <property type="evidence" value="ECO:0007669"/>
    <property type="project" value="Ensembl"/>
</dbReference>
<dbReference type="GO" id="GO:2000300">
    <property type="term" value="P:regulation of synaptic vesicle exocytosis"/>
    <property type="evidence" value="ECO:0000250"/>
    <property type="project" value="ParkinsonsUK-UCL"/>
</dbReference>
<dbReference type="GO" id="GO:0036465">
    <property type="term" value="P:synaptic vesicle recycling"/>
    <property type="evidence" value="ECO:0007669"/>
    <property type="project" value="Ensembl"/>
</dbReference>
<dbReference type="CDD" id="cd01860">
    <property type="entry name" value="Rab5_related"/>
    <property type="match status" value="1"/>
</dbReference>
<dbReference type="FunFam" id="3.40.50.300:FF:000180">
    <property type="entry name" value="Member RAS oncogene family"/>
    <property type="match status" value="1"/>
</dbReference>
<dbReference type="Gene3D" id="3.40.50.300">
    <property type="entry name" value="P-loop containing nucleotide triphosphate hydrolases"/>
    <property type="match status" value="1"/>
</dbReference>
<dbReference type="InterPro" id="IPR027417">
    <property type="entry name" value="P-loop_NTPase"/>
</dbReference>
<dbReference type="InterPro" id="IPR005225">
    <property type="entry name" value="Small_GTP-bd"/>
</dbReference>
<dbReference type="InterPro" id="IPR001806">
    <property type="entry name" value="Small_GTPase"/>
</dbReference>
<dbReference type="NCBIfam" id="TIGR00231">
    <property type="entry name" value="small_GTP"/>
    <property type="match status" value="1"/>
</dbReference>
<dbReference type="PANTHER" id="PTHR47978">
    <property type="match status" value="1"/>
</dbReference>
<dbReference type="Pfam" id="PF00071">
    <property type="entry name" value="Ras"/>
    <property type="match status" value="1"/>
</dbReference>
<dbReference type="PRINTS" id="PR00449">
    <property type="entry name" value="RASTRNSFRMNG"/>
</dbReference>
<dbReference type="SMART" id="SM00175">
    <property type="entry name" value="RAB"/>
    <property type="match status" value="1"/>
</dbReference>
<dbReference type="SMART" id="SM00176">
    <property type="entry name" value="RAN"/>
    <property type="match status" value="1"/>
</dbReference>
<dbReference type="SMART" id="SM00173">
    <property type="entry name" value="RAS"/>
    <property type="match status" value="1"/>
</dbReference>
<dbReference type="SMART" id="SM00174">
    <property type="entry name" value="RHO"/>
    <property type="match status" value="1"/>
</dbReference>
<dbReference type="SUPFAM" id="SSF52540">
    <property type="entry name" value="P-loop containing nucleoside triphosphate hydrolases"/>
    <property type="match status" value="1"/>
</dbReference>
<dbReference type="PROSITE" id="PS51419">
    <property type="entry name" value="RAB"/>
    <property type="match status" value="1"/>
</dbReference>
<organism>
    <name type="scientific">Mus musculus</name>
    <name type="common">Mouse</name>
    <dbReference type="NCBI Taxonomy" id="10090"/>
    <lineage>
        <taxon>Eukaryota</taxon>
        <taxon>Metazoa</taxon>
        <taxon>Chordata</taxon>
        <taxon>Craniata</taxon>
        <taxon>Vertebrata</taxon>
        <taxon>Euteleostomi</taxon>
        <taxon>Mammalia</taxon>
        <taxon>Eutheria</taxon>
        <taxon>Euarchontoglires</taxon>
        <taxon>Glires</taxon>
        <taxon>Rodentia</taxon>
        <taxon>Myomorpha</taxon>
        <taxon>Muroidea</taxon>
        <taxon>Muridae</taxon>
        <taxon>Murinae</taxon>
        <taxon>Mus</taxon>
        <taxon>Mus</taxon>
    </lineage>
</organism>
<accession>Q9CQD1</accession>
<accession>Q3UCX7</accession>
<accession>Q4VAA1</accession>
<accession>Q9DCN5</accession>
<proteinExistence type="evidence at protein level"/>
<keyword id="KW-1003">Cell membrane</keyword>
<keyword id="KW-0966">Cell projection</keyword>
<keyword id="KW-0963">Cytoplasm</keyword>
<keyword id="KW-0968">Cytoplasmic vesicle</keyword>
<keyword id="KW-0903">Direct protein sequencing</keyword>
<keyword id="KW-0254">Endocytosis</keyword>
<keyword id="KW-0967">Endosome</keyword>
<keyword id="KW-0342">GTP-binding</keyword>
<keyword id="KW-0378">Hydrolase</keyword>
<keyword id="KW-0449">Lipoprotein</keyword>
<keyword id="KW-0460">Magnesium</keyword>
<keyword id="KW-0472">Membrane</keyword>
<keyword id="KW-0479">Metal-binding</keyword>
<keyword id="KW-0547">Nucleotide-binding</keyword>
<keyword id="KW-0581">Phagocytosis</keyword>
<keyword id="KW-0597">Phosphoprotein</keyword>
<keyword id="KW-0636">Prenylation</keyword>
<keyword id="KW-0653">Protein transport</keyword>
<keyword id="KW-1185">Reference proteome</keyword>
<keyword id="KW-0813">Transport</keyword>
<evidence type="ECO:0000250" key="1">
    <source>
        <dbReference type="UniProtKB" id="P18066"/>
    </source>
</evidence>
<evidence type="ECO:0000250" key="2">
    <source>
        <dbReference type="UniProtKB" id="P20339"/>
    </source>
</evidence>
<evidence type="ECO:0000250" key="3">
    <source>
        <dbReference type="UniProtKB" id="Q0IIG7"/>
    </source>
</evidence>
<evidence type="ECO:0000256" key="4">
    <source>
        <dbReference type="SAM" id="MobiDB-lite"/>
    </source>
</evidence>
<evidence type="ECO:0000269" key="5">
    <source>
    </source>
</evidence>
<evidence type="ECO:0000269" key="6">
    <source>
    </source>
</evidence>
<evidence type="ECO:0000269" key="7">
    <source>
    </source>
</evidence>
<evidence type="ECO:0000269" key="8">
    <source>
    </source>
</evidence>
<evidence type="ECO:0000269" key="9">
    <source>
    </source>
</evidence>
<evidence type="ECO:0000305" key="10"/>
<evidence type="ECO:0000305" key="11">
    <source>
    </source>
</evidence>
<evidence type="ECO:0000312" key="12">
    <source>
        <dbReference type="MGI" id="MGI:105926"/>
    </source>
</evidence>
<name>RAB5A_MOUSE</name>
<protein>
    <recommendedName>
        <fullName>Ras-related protein Rab-5A</fullName>
        <ecNumber evidence="2">3.6.5.2</ecNumber>
    </recommendedName>
</protein>
<sequence length="215" mass="23599">MANRGATRPNGPNTGNKICQFKLVLLGESAVGKSSLVLRFVKGQFHEFQESTIGAAFLTQTVCLDDTTVKFEIWDTAGQERYHSLAPMYYRGAQAAIVVYDITNEESFARAKNWVKELQRQASPNIVIALSGNKADLANKRAVDFQEAQSYADDNSLLFMETSAKTSMNVNEIFMAIAKKLPKNEPQNPGANSARGRGVDLTEPAQPARSQCCSN</sequence>
<gene>
    <name evidence="12" type="primary">Rab5a</name>
    <name type="synonym">nnyRab5a</name>
</gene>
<comment type="function">
    <text evidence="1 2 6">The small GTPases Rab are key regulators of intracellular membrane trafficking, from the formation of transport vesicles to their fusion with membranes. Rabs cycle between an inactive GDP-bound form and an active GTP-bound form that is able to recruit to membranes different sets of downstream effectors directly responsible for vesicle formation, movement, tethering and fusion. RAB5A is required for the fusion of plasma membranes and early endosomes. Contributes to the regulation of filopodia extension. Required for the exosomal release of SDCBP, CD63, PDCD6IP and syndecan (By similarity). Regulates maturation of apoptotic cell-containing phagosomes, probably downstream of DYN2 and PIK3C3 (PubMed:18425118).</text>
</comment>
<comment type="catalytic activity">
    <reaction evidence="2">
        <text>GTP + H2O = GDP + phosphate + H(+)</text>
        <dbReference type="Rhea" id="RHEA:19669"/>
        <dbReference type="ChEBI" id="CHEBI:15377"/>
        <dbReference type="ChEBI" id="CHEBI:15378"/>
        <dbReference type="ChEBI" id="CHEBI:37565"/>
        <dbReference type="ChEBI" id="CHEBI:43474"/>
        <dbReference type="ChEBI" id="CHEBI:58189"/>
        <dbReference type="EC" id="3.6.5.2"/>
    </reaction>
    <physiologicalReaction direction="left-to-right" evidence="2">
        <dbReference type="Rhea" id="RHEA:19670"/>
    </physiologicalReaction>
</comment>
<comment type="cofactor">
    <cofactor evidence="2">
        <name>Mg(2+)</name>
        <dbReference type="ChEBI" id="CHEBI:18420"/>
    </cofactor>
</comment>
<comment type="activity regulation">
    <text evidence="1 10">Regulated by guanine nucleotide exchange factors (GEFs) including RINL, which promote the exchange of bound GDP for free GTP (By similarity). Regulated by GTPase activating proteins (GAPs) which increase the GTP hydrolysis activity (Probable). Inhibited by GDP dissociation inhibitors (GDIs) (Probable).</text>
</comment>
<comment type="subunit">
    <text evidence="1 2 3 5 7 8 9 11">Interacts with GDI1; this promotes dissociation from membranes; phosphorylation at Ser-84 disrupts this interaction (By similarity). Interacts with GDI2; phosphorylation at Ser-84 disrupts the interaction (By similarity). Interacts with EEA1. Interacts with RIN1 and GAPVD1, which regulate its pathway, probably by acting as a GEF. Interacts with RINL. Interacts with ALS2CL, SUN2, ZFYVE20 and RUFY1. Interacts with RABEP1; one RABEP1 homodimer binds two RAB5A chains, but at opposite sides of the dimer (By similarity). Interacts with SGSM1 and SGSM3 (PubMed:17509819). Interacts with PIK3CB (PubMed:21059846). Interacts with OCRL and INPP5F (PubMed:25869668). May be a component of a complex composed of RAB5A, DYN2 and PIK3C3 (PubMed:18425118). Does not interact with BLOC-3 complex (heterodimer of HPS1 and HPS4). Interacts with CLN5 (By similarity). Interacts with APPL2 (PubMed:25568335). Interacts with F8A1/F8A2/F8A3 (By similarity). Found in a complex with F8A1/F8A2/F8A3, HTT and RAB5A; mediates the recruitment of HTT by RAB5A onto early endosomes (By similarity). Interacts with ATP9A (By similarity). Interacts with PPP1R21; mediates the recruitment of FERRY complex by RAB5A onto early endosomes (By similarity).</text>
</comment>
<comment type="subcellular location">
    <subcellularLocation>
        <location evidence="2">Cell membrane</location>
        <topology evidence="2">Lipid-anchor</topology>
        <orientation evidence="1">Cytoplasmic side</orientation>
    </subcellularLocation>
    <subcellularLocation>
        <location evidence="2">Early endosome membrane</location>
        <topology evidence="2">Lipid-anchor</topology>
    </subcellularLocation>
    <subcellularLocation>
        <location evidence="9">Melanosome</location>
    </subcellularLocation>
    <subcellularLocation>
        <location evidence="2">Cytoplasmic vesicle</location>
    </subcellularLocation>
    <subcellularLocation>
        <location evidence="1">Cell projection</location>
        <location evidence="1">Ruffle</location>
    </subcellularLocation>
    <subcellularLocation>
        <location evidence="2">Membrane</location>
    </subcellularLocation>
    <subcellularLocation>
        <location evidence="2">Cytoplasm</location>
        <location evidence="2">Cytosol</location>
    </subcellularLocation>
    <subcellularLocation>
        <location evidence="6">Cytoplasmic vesicle</location>
        <location evidence="6">Phagosome membrane</location>
    </subcellularLocation>
    <subcellularLocation>
        <location evidence="2">Endosome membrane</location>
    </subcellularLocation>
    <text evidence="2">Enriched in stage I melanosomes. Alternates between membrane-bound and cytosolic forms.</text>
</comment>
<comment type="domain">
    <text evidence="2">Switch 1, switch 2 and the interswitch regions are characteristic of Rab GTPases and mediate the interactions with Rab downstream effectors. The switch regions undergo conformational changes upon nucleotide binding which drive interaction with specific sets of effector proteins, with most effectors only binding to GTP-bound Rab.</text>
</comment>
<comment type="PTM">
    <text evidence="2">Phosphorylation of Ser-84 in the switch II region by LRRK2 prevents the association of RAB regulatory proteins, including RAB GDP dissociation inhibitors GDI1 and GDI2.</text>
</comment>
<comment type="similarity">
    <text evidence="10">Belongs to the small GTPase superfamily. Rab family.</text>
</comment>